<name>SYQ_RHOBA</name>
<proteinExistence type="inferred from homology"/>
<keyword id="KW-0030">Aminoacyl-tRNA synthetase</keyword>
<keyword id="KW-0067">ATP-binding</keyword>
<keyword id="KW-0963">Cytoplasm</keyword>
<keyword id="KW-0436">Ligase</keyword>
<keyword id="KW-0547">Nucleotide-binding</keyword>
<keyword id="KW-0648">Protein biosynthesis</keyword>
<keyword id="KW-1185">Reference proteome</keyword>
<organism>
    <name type="scientific">Rhodopirellula baltica (strain DSM 10527 / NCIMB 13988 / SH1)</name>
    <dbReference type="NCBI Taxonomy" id="243090"/>
    <lineage>
        <taxon>Bacteria</taxon>
        <taxon>Pseudomonadati</taxon>
        <taxon>Planctomycetota</taxon>
        <taxon>Planctomycetia</taxon>
        <taxon>Pirellulales</taxon>
        <taxon>Pirellulaceae</taxon>
        <taxon>Rhodopirellula</taxon>
    </lineage>
</organism>
<feature type="chain" id="PRO_0000195847" description="Glutamine--tRNA ligase">
    <location>
        <begin position="1"/>
        <end position="601"/>
    </location>
</feature>
<feature type="short sequence motif" description="'HIGH' region" evidence="1">
    <location>
        <begin position="76"/>
        <end position="86"/>
    </location>
</feature>
<feature type="short sequence motif" description="'KMSKS' region" evidence="1">
    <location>
        <begin position="308"/>
        <end position="312"/>
    </location>
</feature>
<feature type="binding site" evidence="1">
    <location>
        <begin position="77"/>
        <end position="79"/>
    </location>
    <ligand>
        <name>ATP</name>
        <dbReference type="ChEBI" id="CHEBI:30616"/>
    </ligand>
</feature>
<feature type="binding site" evidence="1">
    <location>
        <begin position="83"/>
        <end position="89"/>
    </location>
    <ligand>
        <name>ATP</name>
        <dbReference type="ChEBI" id="CHEBI:30616"/>
    </ligand>
</feature>
<feature type="binding site" evidence="1">
    <location>
        <position position="109"/>
    </location>
    <ligand>
        <name>L-glutamine</name>
        <dbReference type="ChEBI" id="CHEBI:58359"/>
    </ligand>
</feature>
<feature type="binding site" evidence="1">
    <location>
        <position position="253"/>
    </location>
    <ligand>
        <name>L-glutamine</name>
        <dbReference type="ChEBI" id="CHEBI:58359"/>
    </ligand>
</feature>
<feature type="binding site" evidence="1">
    <location>
        <position position="272"/>
    </location>
    <ligand>
        <name>ATP</name>
        <dbReference type="ChEBI" id="CHEBI:30616"/>
    </ligand>
</feature>
<feature type="binding site" evidence="1">
    <location>
        <begin position="301"/>
        <end position="302"/>
    </location>
    <ligand>
        <name>ATP</name>
        <dbReference type="ChEBI" id="CHEBI:30616"/>
    </ligand>
</feature>
<feature type="binding site" evidence="1">
    <location>
        <begin position="309"/>
        <end position="311"/>
    </location>
    <ligand>
        <name>ATP</name>
        <dbReference type="ChEBI" id="CHEBI:30616"/>
    </ligand>
</feature>
<reference key="1">
    <citation type="journal article" date="2003" name="Proc. Natl. Acad. Sci. U.S.A.">
        <title>Complete genome sequence of the marine planctomycete Pirellula sp. strain 1.</title>
        <authorList>
            <person name="Gloeckner F.O."/>
            <person name="Kube M."/>
            <person name="Bauer M."/>
            <person name="Teeling H."/>
            <person name="Lombardot T."/>
            <person name="Ludwig W."/>
            <person name="Gade D."/>
            <person name="Beck A."/>
            <person name="Borzym K."/>
            <person name="Heitmann K."/>
            <person name="Rabus R."/>
            <person name="Schlesner H."/>
            <person name="Amann R."/>
            <person name="Reinhardt R."/>
        </authorList>
    </citation>
    <scope>NUCLEOTIDE SEQUENCE [LARGE SCALE GENOMIC DNA]</scope>
    <source>
        <strain>DSM 10527 / NCIMB 13988 / SH1</strain>
    </source>
</reference>
<evidence type="ECO:0000255" key="1">
    <source>
        <dbReference type="HAMAP-Rule" id="MF_00126"/>
    </source>
</evidence>
<sequence length="601" mass="68668">MARANRGEHSTLSTFWQSRHNAASFDPLYRRIDVNAPEPSDSATPEKTPSKHFIRQAIDADLASGRFDGVATRFPPEPNGYLHIGHAKSICLNFGLAKDMGGTCNLRFDDTNPIKEDTEYVDSIQEDVRWLGFEWDNLHFASDYFDQLYDWAEQLVKDGKAYVCDLTAEETREYRGTLTEPGKNSPHRDRTPEKNLELLRAMKAGKFKDGEKTLRAKIDMASPNINLRDPVMYRIAHVPHHRTGDKWCIYPMYDWAHGQSDSLEKITFSICTLEFEHHRPLYNWYCENLGIHHPRQIEFARLNMTFTVMSKRKLLQLVKENHVTGWDDPRMPTLVGLRRRGYTPESIRSFCADIGVAKFNSTIDVIRLENSVREHLNSVAPRRMAVLDPIKLTITNWPEGKVEMMNAINNPEDESAGSREIPFSGELYIETEDFREEAPRKFFRLKKGGSVRLRSGYIVDCHDVVKDADGNVTEVLCTYDPETKSGEDTSGRKVKGTIHWVSREHAQKVTVRNYDRLFKVENPDASSDTGSFLDHLNPDSLTTLTAHVEPALAEAAVGDRVQFERLGYYVVDPDSTDGEIIFNRIVPLRDTWGKIEAKGKK</sequence>
<accession>Q7UX42</accession>
<comment type="catalytic activity">
    <reaction evidence="1">
        <text>tRNA(Gln) + L-glutamine + ATP = L-glutaminyl-tRNA(Gln) + AMP + diphosphate</text>
        <dbReference type="Rhea" id="RHEA:20121"/>
        <dbReference type="Rhea" id="RHEA-COMP:9662"/>
        <dbReference type="Rhea" id="RHEA-COMP:9681"/>
        <dbReference type="ChEBI" id="CHEBI:30616"/>
        <dbReference type="ChEBI" id="CHEBI:33019"/>
        <dbReference type="ChEBI" id="CHEBI:58359"/>
        <dbReference type="ChEBI" id="CHEBI:78442"/>
        <dbReference type="ChEBI" id="CHEBI:78521"/>
        <dbReference type="ChEBI" id="CHEBI:456215"/>
        <dbReference type="EC" id="6.1.1.18"/>
    </reaction>
</comment>
<comment type="subunit">
    <text evidence="1">Monomer.</text>
</comment>
<comment type="subcellular location">
    <subcellularLocation>
        <location evidence="1">Cytoplasm</location>
    </subcellularLocation>
</comment>
<comment type="similarity">
    <text evidence="1">Belongs to the class-I aminoacyl-tRNA synthetase family.</text>
</comment>
<dbReference type="EC" id="6.1.1.18" evidence="1"/>
<dbReference type="EMBL" id="BX294135">
    <property type="protein sequence ID" value="CAD72170.1"/>
    <property type="molecule type" value="Genomic_DNA"/>
</dbReference>
<dbReference type="RefSeq" id="NP_864489.1">
    <property type="nucleotide sequence ID" value="NC_005027.1"/>
</dbReference>
<dbReference type="SMR" id="Q7UX42"/>
<dbReference type="FunCoup" id="Q7UX42">
    <property type="interactions" value="444"/>
</dbReference>
<dbReference type="STRING" id="243090.RB1578"/>
<dbReference type="EnsemblBacteria" id="CAD72170">
    <property type="protein sequence ID" value="CAD72170"/>
    <property type="gene ID" value="RB1578"/>
</dbReference>
<dbReference type="KEGG" id="rba:RB1578"/>
<dbReference type="PATRIC" id="fig|243090.15.peg.737"/>
<dbReference type="eggNOG" id="COG0008">
    <property type="taxonomic scope" value="Bacteria"/>
</dbReference>
<dbReference type="HOGENOM" id="CLU_001882_2_3_0"/>
<dbReference type="InParanoid" id="Q7UX42"/>
<dbReference type="OrthoDB" id="9801560at2"/>
<dbReference type="Proteomes" id="UP000001025">
    <property type="component" value="Chromosome"/>
</dbReference>
<dbReference type="GO" id="GO:0005829">
    <property type="term" value="C:cytosol"/>
    <property type="evidence" value="ECO:0000318"/>
    <property type="project" value="GO_Central"/>
</dbReference>
<dbReference type="GO" id="GO:0005524">
    <property type="term" value="F:ATP binding"/>
    <property type="evidence" value="ECO:0007669"/>
    <property type="project" value="UniProtKB-UniRule"/>
</dbReference>
<dbReference type="GO" id="GO:0004819">
    <property type="term" value="F:glutamine-tRNA ligase activity"/>
    <property type="evidence" value="ECO:0000318"/>
    <property type="project" value="GO_Central"/>
</dbReference>
<dbReference type="GO" id="GO:0006425">
    <property type="term" value="P:glutaminyl-tRNA aminoacylation"/>
    <property type="evidence" value="ECO:0000318"/>
    <property type="project" value="GO_Central"/>
</dbReference>
<dbReference type="GO" id="GO:0006424">
    <property type="term" value="P:glutamyl-tRNA aminoacylation"/>
    <property type="evidence" value="ECO:0007669"/>
    <property type="project" value="UniProtKB-UniRule"/>
</dbReference>
<dbReference type="CDD" id="cd00807">
    <property type="entry name" value="GlnRS_core"/>
    <property type="match status" value="1"/>
</dbReference>
<dbReference type="FunFam" id="2.40.240.10:FF:000001">
    <property type="entry name" value="Glutamine--tRNA ligase"/>
    <property type="match status" value="1"/>
</dbReference>
<dbReference type="FunFam" id="2.40.240.10:FF:000020">
    <property type="entry name" value="Glutamine--tRNA ligase"/>
    <property type="match status" value="1"/>
</dbReference>
<dbReference type="FunFam" id="3.40.50.620:FF:000037">
    <property type="entry name" value="Glutamine--tRNA ligase cytoplasmic"/>
    <property type="match status" value="1"/>
</dbReference>
<dbReference type="Gene3D" id="3.40.50.620">
    <property type="entry name" value="HUPs"/>
    <property type="match status" value="1"/>
</dbReference>
<dbReference type="Gene3D" id="2.40.240.10">
    <property type="entry name" value="Ribosomal Protein L25, Chain P"/>
    <property type="match status" value="2"/>
</dbReference>
<dbReference type="HAMAP" id="MF_00126">
    <property type="entry name" value="Gln_tRNA_synth"/>
    <property type="match status" value="1"/>
</dbReference>
<dbReference type="InterPro" id="IPR001412">
    <property type="entry name" value="aa-tRNA-synth_I_CS"/>
</dbReference>
<dbReference type="InterPro" id="IPR004514">
    <property type="entry name" value="Gln-tRNA-synth"/>
</dbReference>
<dbReference type="InterPro" id="IPR050132">
    <property type="entry name" value="Gln/Glu-tRNA_Ligase"/>
</dbReference>
<dbReference type="InterPro" id="IPR022861">
    <property type="entry name" value="Gln_tRNA_ligase_bac"/>
</dbReference>
<dbReference type="InterPro" id="IPR000924">
    <property type="entry name" value="Glu/Gln-tRNA-synth"/>
</dbReference>
<dbReference type="InterPro" id="IPR020058">
    <property type="entry name" value="Glu/Gln-tRNA-synth_Ib_cat-dom"/>
</dbReference>
<dbReference type="InterPro" id="IPR020059">
    <property type="entry name" value="Glu/Gln-tRNA-synth_Ib_codon-bd"/>
</dbReference>
<dbReference type="InterPro" id="IPR020056">
    <property type="entry name" value="Rbsml_bL25/Gln-tRNA_synth_N"/>
</dbReference>
<dbReference type="InterPro" id="IPR011035">
    <property type="entry name" value="Ribosomal_bL25/Gln-tRNA_synth"/>
</dbReference>
<dbReference type="InterPro" id="IPR014729">
    <property type="entry name" value="Rossmann-like_a/b/a_fold"/>
</dbReference>
<dbReference type="InterPro" id="IPR049437">
    <property type="entry name" value="tRNA-synt_1c_C2"/>
</dbReference>
<dbReference type="NCBIfam" id="TIGR00440">
    <property type="entry name" value="glnS"/>
    <property type="match status" value="1"/>
</dbReference>
<dbReference type="NCBIfam" id="NF011291">
    <property type="entry name" value="PRK14703.1"/>
    <property type="match status" value="1"/>
</dbReference>
<dbReference type="PANTHER" id="PTHR43097:SF5">
    <property type="entry name" value="GLUTAMATE--TRNA LIGASE"/>
    <property type="match status" value="1"/>
</dbReference>
<dbReference type="PANTHER" id="PTHR43097">
    <property type="entry name" value="GLUTAMINE-TRNA LIGASE"/>
    <property type="match status" value="1"/>
</dbReference>
<dbReference type="Pfam" id="PF00749">
    <property type="entry name" value="tRNA-synt_1c"/>
    <property type="match status" value="1"/>
</dbReference>
<dbReference type="Pfam" id="PF03950">
    <property type="entry name" value="tRNA-synt_1c_C"/>
    <property type="match status" value="1"/>
</dbReference>
<dbReference type="Pfam" id="PF20974">
    <property type="entry name" value="tRNA-synt_1c_C2"/>
    <property type="match status" value="1"/>
</dbReference>
<dbReference type="PRINTS" id="PR00987">
    <property type="entry name" value="TRNASYNTHGLU"/>
</dbReference>
<dbReference type="SUPFAM" id="SSF52374">
    <property type="entry name" value="Nucleotidylyl transferase"/>
    <property type="match status" value="1"/>
</dbReference>
<dbReference type="SUPFAM" id="SSF50715">
    <property type="entry name" value="Ribosomal protein L25-like"/>
    <property type="match status" value="1"/>
</dbReference>
<dbReference type="PROSITE" id="PS00178">
    <property type="entry name" value="AA_TRNA_LIGASE_I"/>
    <property type="match status" value="1"/>
</dbReference>
<protein>
    <recommendedName>
        <fullName evidence="1">Glutamine--tRNA ligase</fullName>
        <ecNumber evidence="1">6.1.1.18</ecNumber>
    </recommendedName>
    <alternativeName>
        <fullName evidence="1">Glutaminyl-tRNA synthetase</fullName>
        <shortName evidence="1">GlnRS</shortName>
    </alternativeName>
</protein>
<gene>
    <name evidence="1" type="primary">glnS</name>
    <name type="ordered locus">RB1578</name>
</gene>